<accession>Q9YEA0</accession>
<keyword id="KW-1003">Cell membrane</keyword>
<keyword id="KW-0375">Hydrogen ion transport</keyword>
<keyword id="KW-0406">Ion transport</keyword>
<keyword id="KW-0472">Membrane</keyword>
<keyword id="KW-1185">Reference proteome</keyword>
<keyword id="KW-0812">Transmembrane</keyword>
<keyword id="KW-1133">Transmembrane helix</keyword>
<keyword id="KW-0813">Transport</keyword>
<gene>
    <name evidence="3" type="primary">atpI</name>
    <name type="ordered locus">APE_0673.1</name>
</gene>
<proteinExistence type="inferred from homology"/>
<reference key="1">
    <citation type="journal article" date="1999" name="DNA Res.">
        <title>Complete genome sequence of an aerobic hyper-thermophilic crenarchaeon, Aeropyrum pernix K1.</title>
        <authorList>
            <person name="Kawarabayasi Y."/>
            <person name="Hino Y."/>
            <person name="Horikawa H."/>
            <person name="Yamazaki S."/>
            <person name="Haikawa Y."/>
            <person name="Jin-no K."/>
            <person name="Takahashi M."/>
            <person name="Sekine M."/>
            <person name="Baba S."/>
            <person name="Ankai A."/>
            <person name="Kosugi H."/>
            <person name="Hosoyama A."/>
            <person name="Fukui S."/>
            <person name="Nagai Y."/>
            <person name="Nishijima K."/>
            <person name="Nakazawa H."/>
            <person name="Takamiya M."/>
            <person name="Masuda S."/>
            <person name="Funahashi T."/>
            <person name="Tanaka T."/>
            <person name="Kudoh Y."/>
            <person name="Yamazaki J."/>
            <person name="Kushida N."/>
            <person name="Oguchi A."/>
            <person name="Aoki K."/>
            <person name="Kubota K."/>
            <person name="Nakamura Y."/>
            <person name="Nomura N."/>
            <person name="Sako Y."/>
            <person name="Kikuchi H."/>
        </authorList>
    </citation>
    <scope>NUCLEOTIDE SEQUENCE [LARGE SCALE GENOMIC DNA]</scope>
    <source>
        <strain>ATCC 700893 / DSM 11879 / JCM 9820 / NBRC 100138 / K1</strain>
    </source>
</reference>
<feature type="chain" id="PRO_0000119226" description="A-type ATP synthase subunit I">
    <location>
        <begin position="1"/>
        <end position="685"/>
    </location>
</feature>
<feature type="transmembrane region" description="Helical" evidence="2">
    <location>
        <begin position="172"/>
        <end position="192"/>
    </location>
</feature>
<feature type="transmembrane region" description="Helical" evidence="2">
    <location>
        <begin position="348"/>
        <end position="368"/>
    </location>
</feature>
<feature type="transmembrane region" description="Helical" evidence="2">
    <location>
        <begin position="394"/>
        <end position="414"/>
    </location>
</feature>
<feature type="transmembrane region" description="Helical" evidence="2">
    <location>
        <begin position="464"/>
        <end position="484"/>
    </location>
</feature>
<feature type="transmembrane region" description="Helical" evidence="2">
    <location>
        <begin position="538"/>
        <end position="558"/>
    </location>
</feature>
<feature type="transmembrane region" description="Helical" evidence="2">
    <location>
        <begin position="604"/>
        <end position="624"/>
    </location>
</feature>
<feature type="transmembrane region" description="Helical" evidence="2">
    <location>
        <begin position="626"/>
        <end position="646"/>
    </location>
</feature>
<name>AATI_AERPE</name>
<comment type="function">
    <text evidence="1">Component of the A-type ATP synthase that produces ATP from ADP in the presence of a proton gradient across the membrane.</text>
</comment>
<comment type="subunit">
    <text evidence="1">Has multiple subunits with at least A(3), B(3), C, D, E, F, H, I and proteolipid K(x).</text>
</comment>
<comment type="subcellular location">
    <subcellularLocation>
        <location evidence="4">Cell membrane</location>
        <topology evidence="4">Multi-pass membrane protein</topology>
    </subcellularLocation>
</comment>
<comment type="similarity">
    <text evidence="4">Belongs to the V-ATPase 116 kDa subunit family.</text>
</comment>
<sequence length="685" mass="75021">MLLPRMLEEVVLAVPARDYDRVVAGLAVEGIFHVDSPPQGVKGEVDRSYRALLTQASERSSRIRQYFDLAGVEPYRVSGVEIEVGGWGESWKRYLEKYSGVEKFYSGLLEEYSEAEARLKELLDIEARIAPVAHLDVDIARLYRSGAFDFAVYYGSYSEGLESRVGEIVSRVGGLAAVEASGGSVVVAVAVPKGALSKISPEILRLNLSIYTPPEGVPGSPREAMEYIRGEKARLGRRLVSIQEMASERLGELAEFYTVVTAFENIFKFLVSTLRRGETRIVRGFVDVRDSGRLRSIVDRMTRGSYVLLSLGVRRGGEAPIPSKVDLPQFLKPFSRVVELYGYPEPNEIVPTVFLAITLPLTFALMFPDAGQGLLVLLFSLFYLRRVSRDWAYVIAVMGGASVVSGLLAGEVFGPLVSKMLGLPELWYRLGLETPPYAMPTYAIDHGEEELVPVLVYRALNVSLFMGAFMLSFGTFLGVVNGVIKRDWVGLVESRLPRFLLFASITGPFLVYMDAGEAGSVLRQALLELGGDSIAAKLVLAGSVLGLAWMLLAGPIIYMLEGHSPLAGLANSFLEAYESLLMLVGNIPSFLRIMALALAHSSLMFVIYYLTVMIMQGGILADVVGALLYVGGNLAVAAMEGLLAFAHASRLHFYEWFSKFYSGTGVPYTPIKVEGVRIKIAGQTF</sequence>
<organism>
    <name type="scientific">Aeropyrum pernix (strain ATCC 700893 / DSM 11879 / JCM 9820 / NBRC 100138 / K1)</name>
    <dbReference type="NCBI Taxonomy" id="272557"/>
    <lineage>
        <taxon>Archaea</taxon>
        <taxon>Thermoproteota</taxon>
        <taxon>Thermoprotei</taxon>
        <taxon>Desulfurococcales</taxon>
        <taxon>Desulfurococcaceae</taxon>
        <taxon>Aeropyrum</taxon>
    </lineage>
</organism>
<evidence type="ECO:0000250" key="1">
    <source>
        <dbReference type="UniProtKB" id="Q57675"/>
    </source>
</evidence>
<evidence type="ECO:0000255" key="2"/>
<evidence type="ECO:0000303" key="3">
    <source>
    </source>
</evidence>
<evidence type="ECO:0000305" key="4"/>
<protein>
    <recommendedName>
        <fullName evidence="4">A-type ATP synthase subunit I</fullName>
    </recommendedName>
</protein>
<dbReference type="EMBL" id="BA000002">
    <property type="protein sequence ID" value="BAA79646.2"/>
    <property type="molecule type" value="Genomic_DNA"/>
</dbReference>
<dbReference type="PIR" id="F72655">
    <property type="entry name" value="F72655"/>
</dbReference>
<dbReference type="RefSeq" id="WP_010865894.1">
    <property type="nucleotide sequence ID" value="NC_000854.2"/>
</dbReference>
<dbReference type="SMR" id="Q9YEA0"/>
<dbReference type="STRING" id="272557.APE_0673.1"/>
<dbReference type="EnsemblBacteria" id="BAA79646">
    <property type="protein sequence ID" value="BAA79646"/>
    <property type="gene ID" value="APE_0673.1"/>
</dbReference>
<dbReference type="GeneID" id="1444807"/>
<dbReference type="KEGG" id="ape:APE_0673.1"/>
<dbReference type="eggNOG" id="arCOG04138">
    <property type="taxonomic scope" value="Archaea"/>
</dbReference>
<dbReference type="Proteomes" id="UP000002518">
    <property type="component" value="Chromosome"/>
</dbReference>
<dbReference type="GO" id="GO:0005886">
    <property type="term" value="C:plasma membrane"/>
    <property type="evidence" value="ECO:0007669"/>
    <property type="project" value="UniProtKB-SubCell"/>
</dbReference>
<dbReference type="GO" id="GO:0033179">
    <property type="term" value="C:proton-transporting V-type ATPase, V0 domain"/>
    <property type="evidence" value="ECO:0007669"/>
    <property type="project" value="InterPro"/>
</dbReference>
<dbReference type="GO" id="GO:0016471">
    <property type="term" value="C:vacuolar proton-transporting V-type ATPase complex"/>
    <property type="evidence" value="ECO:0007669"/>
    <property type="project" value="TreeGrafter"/>
</dbReference>
<dbReference type="GO" id="GO:0051117">
    <property type="term" value="F:ATPase binding"/>
    <property type="evidence" value="ECO:0007669"/>
    <property type="project" value="TreeGrafter"/>
</dbReference>
<dbReference type="GO" id="GO:0046961">
    <property type="term" value="F:proton-transporting ATPase activity, rotational mechanism"/>
    <property type="evidence" value="ECO:0007669"/>
    <property type="project" value="InterPro"/>
</dbReference>
<dbReference type="GO" id="GO:0007035">
    <property type="term" value="P:vacuolar acidification"/>
    <property type="evidence" value="ECO:0007669"/>
    <property type="project" value="TreeGrafter"/>
</dbReference>
<dbReference type="InterPro" id="IPR002490">
    <property type="entry name" value="V-ATPase_116kDa_su"/>
</dbReference>
<dbReference type="NCBIfam" id="NF004434">
    <property type="entry name" value="PRK05771.3-3"/>
    <property type="match status" value="1"/>
</dbReference>
<dbReference type="PANTHER" id="PTHR11629:SF63">
    <property type="entry name" value="V-TYPE PROTON ATPASE SUBUNIT A"/>
    <property type="match status" value="1"/>
</dbReference>
<dbReference type="PANTHER" id="PTHR11629">
    <property type="entry name" value="VACUOLAR PROTON ATPASES"/>
    <property type="match status" value="1"/>
</dbReference>
<dbReference type="Pfam" id="PF01496">
    <property type="entry name" value="V_ATPase_I"/>
    <property type="match status" value="2"/>
</dbReference>